<comment type="function">
    <text evidence="3 4">Transcription factor that acts as a blue light sensor (PubMed:39330410). Plays crucial roles in fungal growth and asexual development (PubMed:39330410, PubMed:39947678). Involved in conidiophore formation, sclerotium production, and conidial stress tolerance (PubMed:39330410, PubMed:39947678). Promotes conidiation by inducing the expression of brlA and abaA (PubMed:39330410). Positively regulates the fungal pathogenicity towards maize (PubMed:39947678). In blue light conditions, inhibits aflatoxin B1 (AFB1) biosynthesis by down-regulating the expression of key genes such as aflA, aflJ, aflH, aflO and aflK (PubMed:39330410).</text>
</comment>
<comment type="induction">
    <text evidence="4">Highly expressed in conidia.</text>
</comment>
<comment type="disruption phenotype">
    <text evidence="3 4">Reduces the number of conidia (PubMed:39947678). Increases sensitivity of conidia against thermal and oxidative stresses (PubMed:39947678). Decreases the expression of brlA and abaA involved in conidiation and increases the expression of aflA, aflJ, aflH, aflO and aflK, and subsequent production of AFB1, under blue light irradiation (PubMed:39330410).</text>
</comment>
<name>LREA_ASPFL</name>
<feature type="chain" id="PRO_0000462349" description="Blue light receptor lreA">
    <location>
        <begin position="1"/>
        <end position="857"/>
    </location>
</feature>
<feature type="domain" description="PAS 1" evidence="2">
    <location>
        <begin position="306"/>
        <end position="328"/>
    </location>
</feature>
<feature type="domain" description="PAS 2" evidence="2">
    <location>
        <begin position="479"/>
        <end position="542"/>
    </location>
</feature>
<feature type="domain" description="PAS 3" evidence="2">
    <location>
        <begin position="608"/>
        <end position="642"/>
    </location>
</feature>
<feature type="zinc finger region" description="GATA-type" evidence="1">
    <location>
        <begin position="811"/>
        <end position="836"/>
    </location>
</feature>
<accession>A0A364LYQ6</accession>
<dbReference type="EMBL" id="QQZZ01000104">
    <property type="protein sequence ID" value="RMZ42427.1"/>
    <property type="molecule type" value="Genomic_DNA"/>
</dbReference>
<dbReference type="EMBL" id="ML734615">
    <property type="protein sequence ID" value="KAB8245227.1"/>
    <property type="molecule type" value="Genomic_DNA"/>
</dbReference>
<dbReference type="SMR" id="A0A364LYQ6"/>
<dbReference type="VEuPathDB" id="FungiDB:AFLA_010605"/>
<dbReference type="VEuPathDB" id="FungiDB:F9C07_2286321"/>
<dbReference type="OrthoDB" id="447251at2759"/>
<dbReference type="Proteomes" id="UP000275480">
    <property type="component" value="Unassembled WGS sequence"/>
</dbReference>
<dbReference type="Proteomes" id="UP000325434">
    <property type="component" value="Unassembled WGS sequence"/>
</dbReference>
<dbReference type="GO" id="GO:0005634">
    <property type="term" value="C:nucleus"/>
    <property type="evidence" value="ECO:0007669"/>
    <property type="project" value="TreeGrafter"/>
</dbReference>
<dbReference type="GO" id="GO:0043565">
    <property type="term" value="F:sequence-specific DNA binding"/>
    <property type="evidence" value="ECO:0007669"/>
    <property type="project" value="InterPro"/>
</dbReference>
<dbReference type="GO" id="GO:0008270">
    <property type="term" value="F:zinc ion binding"/>
    <property type="evidence" value="ECO:0007669"/>
    <property type="project" value="InterPro"/>
</dbReference>
<dbReference type="GO" id="GO:0006355">
    <property type="term" value="P:regulation of DNA-templated transcription"/>
    <property type="evidence" value="ECO:0007669"/>
    <property type="project" value="InterPro"/>
</dbReference>
<dbReference type="CDD" id="cd00130">
    <property type="entry name" value="PAS"/>
    <property type="match status" value="3"/>
</dbReference>
<dbReference type="CDD" id="cd00202">
    <property type="entry name" value="ZnF_GATA"/>
    <property type="match status" value="1"/>
</dbReference>
<dbReference type="FunFam" id="3.30.50.10:FF:000065">
    <property type="entry name" value="GATA transcription factor LreA"/>
    <property type="match status" value="1"/>
</dbReference>
<dbReference type="FunFam" id="3.30.450.20:FF:000064">
    <property type="entry name" value="Vivid PAS protein VVD"/>
    <property type="match status" value="1"/>
</dbReference>
<dbReference type="Gene3D" id="3.30.50.10">
    <property type="entry name" value="Erythroid Transcription Factor GATA-1, subunit A"/>
    <property type="match status" value="1"/>
</dbReference>
<dbReference type="Gene3D" id="3.30.450.20">
    <property type="entry name" value="PAS domain"/>
    <property type="match status" value="3"/>
</dbReference>
<dbReference type="InterPro" id="IPR000014">
    <property type="entry name" value="PAS"/>
</dbReference>
<dbReference type="InterPro" id="IPR035965">
    <property type="entry name" value="PAS-like_dom_sf"/>
</dbReference>
<dbReference type="InterPro" id="IPR013655">
    <property type="entry name" value="PAS_fold_3"/>
</dbReference>
<dbReference type="InterPro" id="IPR000679">
    <property type="entry name" value="Znf_GATA"/>
</dbReference>
<dbReference type="InterPro" id="IPR013088">
    <property type="entry name" value="Znf_NHR/GATA"/>
</dbReference>
<dbReference type="NCBIfam" id="TIGR00229">
    <property type="entry name" value="sensory_box"/>
    <property type="match status" value="2"/>
</dbReference>
<dbReference type="PANTHER" id="PTHR47429:SF7">
    <property type="entry name" value="GATA-FACTOR"/>
    <property type="match status" value="1"/>
</dbReference>
<dbReference type="PANTHER" id="PTHR47429">
    <property type="entry name" value="PROTEIN TWIN LOV 1"/>
    <property type="match status" value="1"/>
</dbReference>
<dbReference type="Pfam" id="PF00320">
    <property type="entry name" value="GATA"/>
    <property type="match status" value="1"/>
</dbReference>
<dbReference type="Pfam" id="PF08447">
    <property type="entry name" value="PAS_3"/>
    <property type="match status" value="1"/>
</dbReference>
<dbReference type="Pfam" id="PF13426">
    <property type="entry name" value="PAS_9"/>
    <property type="match status" value="2"/>
</dbReference>
<dbReference type="SMART" id="SM00091">
    <property type="entry name" value="PAS"/>
    <property type="match status" value="3"/>
</dbReference>
<dbReference type="SMART" id="SM00401">
    <property type="entry name" value="ZnF_GATA"/>
    <property type="match status" value="1"/>
</dbReference>
<dbReference type="SUPFAM" id="SSF57716">
    <property type="entry name" value="Glucocorticoid receptor-like (DNA-binding domain)"/>
    <property type="match status" value="1"/>
</dbReference>
<dbReference type="SUPFAM" id="SSF55785">
    <property type="entry name" value="PYP-like sensor domain (PAS domain)"/>
    <property type="match status" value="3"/>
</dbReference>
<dbReference type="PROSITE" id="PS00344">
    <property type="entry name" value="GATA_ZN_FINGER_1"/>
    <property type="match status" value="1"/>
</dbReference>
<dbReference type="PROSITE" id="PS50114">
    <property type="entry name" value="GATA_ZN_FINGER_2"/>
    <property type="match status" value="1"/>
</dbReference>
<dbReference type="PROSITE" id="PS50112">
    <property type="entry name" value="PAS"/>
    <property type="match status" value="2"/>
</dbReference>
<gene>
    <name evidence="5" type="primary">lreA</name>
    <name type="ORF">BDV35DRAFT_381593</name>
</gene>
<proteinExistence type="evidence at transcript level"/>
<keyword id="KW-0010">Activator</keyword>
<keyword id="KW-0157">Chromophore</keyword>
<keyword id="KW-0238">DNA-binding</keyword>
<keyword id="KW-0285">Flavoprotein</keyword>
<keyword id="KW-0288">FMN</keyword>
<keyword id="KW-0479">Metal-binding</keyword>
<keyword id="KW-0600">Photoreceptor protein</keyword>
<keyword id="KW-0675">Receptor</keyword>
<keyword id="KW-0677">Repeat</keyword>
<keyword id="KW-0716">Sensory transduction</keyword>
<keyword id="KW-0804">Transcription</keyword>
<keyword id="KW-0805">Transcription regulation</keyword>
<keyword id="KW-0843">Virulence</keyword>
<keyword id="KW-0862">Zinc</keyword>
<keyword id="KW-0863">Zinc-finger</keyword>
<organism>
    <name type="scientific">Aspergillus flavus</name>
    <dbReference type="NCBI Taxonomy" id="5059"/>
    <lineage>
        <taxon>Eukaryota</taxon>
        <taxon>Fungi</taxon>
        <taxon>Dikarya</taxon>
        <taxon>Ascomycota</taxon>
        <taxon>Pezizomycotina</taxon>
        <taxon>Eurotiomycetes</taxon>
        <taxon>Eurotiomycetidae</taxon>
        <taxon>Eurotiales</taxon>
        <taxon>Aspergillaceae</taxon>
        <taxon>Aspergillus</taxon>
        <taxon>Aspergillus subgen. Circumdati</taxon>
    </lineage>
</organism>
<sequence>MEGFSDGYYDAQYTVPASDHRVEYPLSSSDHYAQAMMPFATPDQMHAAGFAYQSQIPDLVANSASFVFPSHTAGLSLNLPEHPMPAENLGDRTSNAMLLYDPLSALGGSTPTAINTGDPFAYNAFQSPFPAMSLENFQGQQSLSFHNTCLPSQPMNLNPSVAYSTMQTHGPILNTYQAPPRHAELTTSAKPTGTLDKQPSTNFPQPAGQTSQRRRNRGFQSSGPTPTHRFIQPKRPSPTKAPLPPHPKSAAGETSQYASIYSSSGFDIMGVLAEVVSRPNPKINIGAVDLSCAFVLCDITQNDHPIIYVSEAFERLTGYTEQEIVGQNCRFLQGPEGVVQKGMKRTFVDDETTSRLRSTIEDRTEIQASLINYRKGGQPFMNLITMIPIRWSSQEYRFYVGFQVDLVETPDAVTRRNPNGTYTINYQRSRLPNYVVPPPDLYRSHPDLTTWFTTDQVSTILKSLNNSTLTYRNYLDRVLVENTDDIIHALSLEGEFLYLSPSCRKVLEYEPIELVGKTLSTVCHPSDIGPVIRDLRACTTTDPVSVVFRIRKKYSGYIWFESHGSWRMGERGRQFMVLVGRPRFVYCLDHIASIGHGSLAETDVWAKLSKSGIVLFMTSKARPVLGRMPDELIGKSLQDLMDSRAEAQKALGVARTGQRVTFSHKIRHKKGHMLPAQTTLHPGDTKEGVRPSFLVAHISFPKPPQGGNDELNSAPPPNRNLAVSKIHRQAVSGVSGVAGQNMLASVKQANPQIQKLPFFTELVPTRGSSWQVELRELEKQNRTLSDELQKLLTRRKKRKRKQSTASVEKSCAICQTKKTPEWRRGPSGERDLCNSCGLRWAKQVRNAAQVAGRPNAY</sequence>
<reference key="1">
    <citation type="submission" date="2018-07" db="EMBL/GenBank/DDBJ databases">
        <title>Identification of spontaneous genetic mutation associated with occurrence of a yellow conidial color mutant of Aspergillus flavus.</title>
        <authorList>
            <person name="Chang P.-K."/>
            <person name="Mack B.M."/>
            <person name="Scharfenstein L."/>
            <person name="Gilbert M.K."/>
        </authorList>
    </citation>
    <scope>NUCLEOTIDE SEQUENCE [LARGE SCALE GENOMIC DNA]</scope>
    <source>
        <strain>CA14</strain>
    </source>
</reference>
<reference key="2">
    <citation type="submission" date="2019-04" db="EMBL/GenBank/DDBJ databases">
        <title>Friends and foes A comparative genomics study of 23 Aspergillus species from section Flavi.</title>
        <authorList>
            <consortium name="DOE Joint Genome Institute"/>
            <person name="Kjaerbolling I."/>
            <person name="Vesth T."/>
            <person name="Frisvad J.C."/>
            <person name="Nybo J.L."/>
            <person name="Theobald S."/>
            <person name="Kildgaard S."/>
            <person name="Isbrandt T."/>
            <person name="Kuo A."/>
            <person name="Sato A."/>
            <person name="Lyhne E.K."/>
            <person name="Kogle M.E."/>
            <person name="Wiebenga A."/>
            <person name="Kun R.S."/>
            <person name="Lubbers R.J."/>
            <person name="Makela M.R."/>
            <person name="Barry K."/>
            <person name="Chovatia M."/>
            <person name="Clum A."/>
            <person name="Daum C."/>
            <person name="Haridas S."/>
            <person name="He G."/>
            <person name="LaButti K."/>
            <person name="Lipzen A."/>
            <person name="Mondo S."/>
            <person name="Riley R."/>
            <person name="Salamov A."/>
            <person name="Simmons B.A."/>
            <person name="Magnuson J.K."/>
            <person name="Henrissat B."/>
            <person name="Mortensen U.H."/>
            <person name="Larsen T.O."/>
            <person name="Devries R.P."/>
            <person name="Grigoriev I.V."/>
            <person name="Machida M."/>
            <person name="Baker S.E."/>
            <person name="Andersen M.R."/>
        </authorList>
    </citation>
    <scope>NUCLEOTIDE SEQUENCE [LARGE SCALE GENOMIC DNA]</scope>
    <source>
        <strain>CBS 121.62</strain>
    </source>
</reference>
<reference key="3">
    <citation type="journal article" date="2024" name="J. Fungi">
        <title>Regulation of Conidiation and Aflatoxin B1 Biosynthesis by a Blue Light Sensor LreA in Aspergillus flavus.</title>
        <authorList>
            <person name="Jia K."/>
            <person name="Jia Y."/>
            <person name="Zeng Q."/>
            <person name="Yan Z."/>
            <person name="Wang S."/>
        </authorList>
    </citation>
    <scope>FUNCTION</scope>
    <scope>DISRUPTION PHENOTYPE</scope>
</reference>
<reference key="4">
    <citation type="journal article" date="2025" name="J. Microbiol. Biotechnol.">
        <title>Characterization of Blue Light Receptors LreA and LreB in Aspergillus flavus.</title>
        <authorList>
            <person name="Park H.M."/>
            <person name="Son Y.E."/>
            <person name="Cho H.J."/>
            <person name="Yu J.H."/>
            <person name="Park H.S."/>
        </authorList>
    </citation>
    <scope>FUNCTION</scope>
    <scope>DISRUPTION PHENOTYPE</scope>
    <scope>INDUCTION</scope>
</reference>
<evidence type="ECO:0000255" key="1">
    <source>
        <dbReference type="PROSITE-ProRule" id="PRU00094"/>
    </source>
</evidence>
<evidence type="ECO:0000255" key="2">
    <source>
        <dbReference type="PROSITE-ProRule" id="PRU00140"/>
    </source>
</evidence>
<evidence type="ECO:0000269" key="3">
    <source>
    </source>
</evidence>
<evidence type="ECO:0000269" key="4">
    <source>
    </source>
</evidence>
<evidence type="ECO:0000303" key="5">
    <source>
    </source>
</evidence>
<protein>
    <recommendedName>
        <fullName evidence="5">Blue light receptor lreA</fullName>
    </recommendedName>
</protein>